<protein>
    <recommendedName>
        <fullName evidence="1">UPF0398 protein M6_Spy1399</fullName>
    </recommendedName>
</protein>
<evidence type="ECO:0000255" key="1">
    <source>
        <dbReference type="HAMAP-Rule" id="MF_01575"/>
    </source>
</evidence>
<organism>
    <name type="scientific">Streptococcus pyogenes serotype M6 (strain ATCC BAA-946 / MGAS10394)</name>
    <dbReference type="NCBI Taxonomy" id="286636"/>
    <lineage>
        <taxon>Bacteria</taxon>
        <taxon>Bacillati</taxon>
        <taxon>Bacillota</taxon>
        <taxon>Bacilli</taxon>
        <taxon>Lactobacillales</taxon>
        <taxon>Streptococcaceae</taxon>
        <taxon>Streptococcus</taxon>
    </lineage>
</organism>
<reference key="1">
    <citation type="journal article" date="2004" name="J. Infect. Dis.">
        <title>Progress toward characterization of the group A Streptococcus metagenome: complete genome sequence of a macrolide-resistant serotype M6 strain.</title>
        <authorList>
            <person name="Banks D.J."/>
            <person name="Porcella S.F."/>
            <person name="Barbian K.D."/>
            <person name="Beres S.B."/>
            <person name="Philips L.E."/>
            <person name="Voyich J.M."/>
            <person name="DeLeo F.R."/>
            <person name="Martin J.M."/>
            <person name="Somerville G.A."/>
            <person name="Musser J.M."/>
        </authorList>
    </citation>
    <scope>NUCLEOTIDE SEQUENCE [LARGE SCALE GENOMIC DNA]</scope>
    <source>
        <strain>ATCC BAA-946 / MGAS10394</strain>
    </source>
</reference>
<comment type="similarity">
    <text evidence="1">Belongs to the UPF0398 family.</text>
</comment>
<name>Y1399_STRP6</name>
<sequence>MTAILITGYRSFEIGIFDHKDPRVSIIKQAIRKDLIGYLENGVDWFIFTGNLGFEQWALEVANELKEEYPLQIGTIFLFETHGDRWNEKNQEVLSQFRAVDFVKYYFPNYEQPTQFSQYYQFLLEKTEGAYVFYDTENETNLKYFLKKAKDMPHYQLLLLTFDRLNDMSQS</sequence>
<dbReference type="EMBL" id="CP000003">
    <property type="protein sequence ID" value="AAT87534.1"/>
    <property type="molecule type" value="Genomic_DNA"/>
</dbReference>
<dbReference type="RefSeq" id="WP_011184827.1">
    <property type="nucleotide sequence ID" value="NC_006086.1"/>
</dbReference>
<dbReference type="SMR" id="Q5XAM9"/>
<dbReference type="KEGG" id="spa:M6_Spy1399"/>
<dbReference type="HOGENOM" id="CLU_105319_0_0_9"/>
<dbReference type="Proteomes" id="UP000001167">
    <property type="component" value="Chromosome"/>
</dbReference>
<dbReference type="Gene3D" id="3.40.50.450">
    <property type="match status" value="1"/>
</dbReference>
<dbReference type="HAMAP" id="MF_01575">
    <property type="entry name" value="UPF0398"/>
    <property type="match status" value="1"/>
</dbReference>
<dbReference type="InterPro" id="IPR010697">
    <property type="entry name" value="YspA"/>
</dbReference>
<dbReference type="NCBIfam" id="NF010181">
    <property type="entry name" value="PRK13660.1"/>
    <property type="match status" value="1"/>
</dbReference>
<dbReference type="PANTHER" id="PTHR38440:SF1">
    <property type="entry name" value="UPF0398 PROTEIN SPR0331"/>
    <property type="match status" value="1"/>
</dbReference>
<dbReference type="PANTHER" id="PTHR38440">
    <property type="entry name" value="UPF0398 PROTEIN YPSA"/>
    <property type="match status" value="1"/>
</dbReference>
<dbReference type="Pfam" id="PF06908">
    <property type="entry name" value="YpsA"/>
    <property type="match status" value="1"/>
</dbReference>
<dbReference type="PIRSF" id="PIRSF021290">
    <property type="entry name" value="DUF1273"/>
    <property type="match status" value="1"/>
</dbReference>
<dbReference type="SUPFAM" id="SSF102405">
    <property type="entry name" value="MCP/YpsA-like"/>
    <property type="match status" value="1"/>
</dbReference>
<feature type="chain" id="PRO_0000267195" description="UPF0398 protein M6_Spy1399">
    <location>
        <begin position="1"/>
        <end position="171"/>
    </location>
</feature>
<accession>Q5XAM9</accession>
<gene>
    <name type="ordered locus">M6_Spy1399</name>
</gene>
<proteinExistence type="inferred from homology"/>